<dbReference type="EMBL" id="DQ226511">
    <property type="protein sequence ID" value="ABB20986.1"/>
    <property type="molecule type" value="Genomic_DNA"/>
</dbReference>
<dbReference type="RefSeq" id="YP_762290.1">
    <property type="nucleotide sequence ID" value="NC_008359.1"/>
</dbReference>
<dbReference type="SMR" id="Q09WY8"/>
<dbReference type="GeneID" id="4290649"/>
<dbReference type="GO" id="GO:0009535">
    <property type="term" value="C:chloroplast thylakoid membrane"/>
    <property type="evidence" value="ECO:0007669"/>
    <property type="project" value="UniProtKB-SubCell"/>
</dbReference>
<dbReference type="GO" id="GO:0009523">
    <property type="term" value="C:photosystem II"/>
    <property type="evidence" value="ECO:0007669"/>
    <property type="project" value="UniProtKB-KW"/>
</dbReference>
<dbReference type="GO" id="GO:0042301">
    <property type="term" value="F:phosphate ion binding"/>
    <property type="evidence" value="ECO:0007669"/>
    <property type="project" value="InterPro"/>
</dbReference>
<dbReference type="GO" id="GO:0015979">
    <property type="term" value="P:photosynthesis"/>
    <property type="evidence" value="ECO:0007669"/>
    <property type="project" value="UniProtKB-UniRule"/>
</dbReference>
<dbReference type="GO" id="GO:0050821">
    <property type="term" value="P:protein stabilization"/>
    <property type="evidence" value="ECO:0007669"/>
    <property type="project" value="InterPro"/>
</dbReference>
<dbReference type="FunFam" id="1.20.5.880:FF:000001">
    <property type="entry name" value="Photosystem II reaction center protein H"/>
    <property type="match status" value="1"/>
</dbReference>
<dbReference type="Gene3D" id="1.20.5.880">
    <property type="entry name" value="Photosystem II reaction center protein H"/>
    <property type="match status" value="1"/>
</dbReference>
<dbReference type="HAMAP" id="MF_00752">
    <property type="entry name" value="PSII_PsbH"/>
    <property type="match status" value="1"/>
</dbReference>
<dbReference type="InterPro" id="IPR001056">
    <property type="entry name" value="PSII_PsbH"/>
</dbReference>
<dbReference type="InterPro" id="IPR036863">
    <property type="entry name" value="PSII_PsbH_sf"/>
</dbReference>
<dbReference type="NCBIfam" id="NF002728">
    <property type="entry name" value="PRK02624.1"/>
    <property type="match status" value="1"/>
</dbReference>
<dbReference type="PANTHER" id="PTHR34469">
    <property type="entry name" value="PHOTOSYSTEM II REACTION CENTER PROTEIN H"/>
    <property type="match status" value="1"/>
</dbReference>
<dbReference type="PANTHER" id="PTHR34469:SF4">
    <property type="entry name" value="PHOTOSYSTEM II REACTION CENTER PROTEIN H"/>
    <property type="match status" value="1"/>
</dbReference>
<dbReference type="Pfam" id="PF00737">
    <property type="entry name" value="PsbH"/>
    <property type="match status" value="1"/>
</dbReference>
<dbReference type="SUPFAM" id="SSF161025">
    <property type="entry name" value="Photosystem II 10 kDa phosphoprotein PsbH"/>
    <property type="match status" value="1"/>
</dbReference>
<proteinExistence type="inferred from homology"/>
<evidence type="ECO:0000250" key="1">
    <source>
        <dbReference type="UniProtKB" id="P56780"/>
    </source>
</evidence>
<evidence type="ECO:0000255" key="2">
    <source>
        <dbReference type="HAMAP-Rule" id="MF_00752"/>
    </source>
</evidence>
<evidence type="ECO:0000256" key="3">
    <source>
        <dbReference type="SAM" id="MobiDB-lite"/>
    </source>
</evidence>
<feature type="initiator methionine" description="Removed" evidence="1">
    <location>
        <position position="1"/>
    </location>
</feature>
<feature type="chain" id="PRO_0000275761" description="Photosystem II reaction center protein H">
    <location>
        <begin position="2"/>
        <end position="73"/>
    </location>
</feature>
<feature type="transmembrane region" description="Helical" evidence="2">
    <location>
        <begin position="41"/>
        <end position="61"/>
    </location>
</feature>
<feature type="region of interest" description="Disordered" evidence="3">
    <location>
        <begin position="1"/>
        <end position="20"/>
    </location>
</feature>
<feature type="compositionally biased region" description="Low complexity" evidence="3">
    <location>
        <begin position="8"/>
        <end position="20"/>
    </location>
</feature>
<feature type="modified residue" description="Phosphothreonine" evidence="2">
    <location>
        <position position="3"/>
    </location>
</feature>
<feature type="modified residue" description="Phosphothreonine" evidence="2">
    <location>
        <position position="5"/>
    </location>
</feature>
<accession>Q09WY8</accession>
<reference key="1">
    <citation type="submission" date="2005-09" db="EMBL/GenBank/DDBJ databases">
        <title>The chloroplast genome of mulberry: structural features and comparative analysis.</title>
        <authorList>
            <person name="Ravi V."/>
            <person name="Khurana J.P."/>
            <person name="Tyagi A.K."/>
            <person name="Khurana P."/>
        </authorList>
    </citation>
    <scope>NUCLEOTIDE SEQUENCE [LARGE SCALE GENOMIC DNA]</scope>
    <source>
        <strain>cv. K2</strain>
    </source>
</reference>
<keyword id="KW-0150">Chloroplast</keyword>
<keyword id="KW-0472">Membrane</keyword>
<keyword id="KW-0597">Phosphoprotein</keyword>
<keyword id="KW-0602">Photosynthesis</keyword>
<keyword id="KW-0604">Photosystem II</keyword>
<keyword id="KW-0934">Plastid</keyword>
<keyword id="KW-0793">Thylakoid</keyword>
<keyword id="KW-0812">Transmembrane</keyword>
<keyword id="KW-1133">Transmembrane helix</keyword>
<sequence length="73" mass="7749">MATQTVEGSSRSGSRRTSVGNLLKPLNSEYGKVAPGWGTTPLMGIAMALFAIFLSIILEIYNSSILLDGISMN</sequence>
<geneLocation type="chloroplast"/>
<name>PSBH_MORIN</name>
<gene>
    <name evidence="2" type="primary">psbH</name>
    <name type="ordered locus">MoinCp050</name>
</gene>
<protein>
    <recommendedName>
        <fullName evidence="2">Photosystem II reaction center protein H</fullName>
        <shortName evidence="2">PSII-H</shortName>
    </recommendedName>
    <alternativeName>
        <fullName evidence="2">Photosystem II 10 kDa phosphoprotein</fullName>
    </alternativeName>
</protein>
<organism>
    <name type="scientific">Morus indica</name>
    <name type="common">Mulberry</name>
    <dbReference type="NCBI Taxonomy" id="248361"/>
    <lineage>
        <taxon>Eukaryota</taxon>
        <taxon>Viridiplantae</taxon>
        <taxon>Streptophyta</taxon>
        <taxon>Embryophyta</taxon>
        <taxon>Tracheophyta</taxon>
        <taxon>Spermatophyta</taxon>
        <taxon>Magnoliopsida</taxon>
        <taxon>eudicotyledons</taxon>
        <taxon>Gunneridae</taxon>
        <taxon>Pentapetalae</taxon>
        <taxon>rosids</taxon>
        <taxon>fabids</taxon>
        <taxon>Rosales</taxon>
        <taxon>Moraceae</taxon>
        <taxon>Moreae</taxon>
        <taxon>Morus</taxon>
    </lineage>
</organism>
<comment type="function">
    <text evidence="2">One of the components of the core complex of photosystem II (PSII), required for its stability and/or assembly. PSII is a light-driven water:plastoquinone oxidoreductase that uses light energy to abstract electrons from H(2)O, generating O(2) and a proton gradient subsequently used for ATP formation. It consists of a core antenna complex that captures photons, and an electron transfer chain that converts photonic excitation into a charge separation.</text>
</comment>
<comment type="subunit">
    <text evidence="2">PSII is composed of 1 copy each of membrane proteins PsbA, PsbB, PsbC, PsbD, PsbE, PsbF, PsbH, PsbI, PsbJ, PsbK, PsbL, PsbM, PsbT, PsbX, PsbY, PsbZ, Psb30/Ycf12, at least 3 peripheral proteins of the oxygen-evolving complex and a large number of cofactors. It forms dimeric complexes.</text>
</comment>
<comment type="subcellular location">
    <subcellularLocation>
        <location evidence="2">Plastid</location>
        <location evidence="2">Chloroplast thylakoid membrane</location>
        <topology evidence="2">Single-pass membrane protein</topology>
    </subcellularLocation>
</comment>
<comment type="PTM">
    <text evidence="2">Phosphorylation is a light-dependent reaction catalyzed by a membrane-bound kinase; phosphorylation occurs on Thr residue(s) in the N-terminus of the protein.</text>
</comment>
<comment type="similarity">
    <text evidence="2">Belongs to the PsbH family.</text>
</comment>